<sequence length="376" mass="41882">MADDDVQALVVDNGSGMCKAGFAGDDAPRAVFPSIVGRPKHLGIMVGMDQKDAYVGDEAQSKRGVLTLKYPIEHGIVTNWDDMEKIWHHTFYNELRVAPEEHPVLLTEAPLNPKANRERMTQIMFETFNVPAMYVNIQAVLSLYASGRTTGCVLDSGDGVSHTVPIYEGYALPHAIVRLDLAGRDLTDYMMKILTERGYSFTTTAEREIVRDIKEKLTYIALDFDQEMKTAAESSGLEKSYELPDGNVIVIGNERFRTPEVLFQPSLIGKEASGIHECTFQTIMKCDVDIRKDLYCNIVLSGGTTMYPGIGERMTKELTALAPSTMKIKVVAPPERKYSVWIGGSIQSSLSTFQQMWISKAEYDESGPSIVHRKCF</sequence>
<reference key="1">
    <citation type="journal article" date="1991" name="Gene">
        <title>Actin in the oomycetous fungus Phytophthora infestans is the product of several genes.</title>
        <authorList>
            <person name="Unkles S.E."/>
            <person name="Moon R.P."/>
            <person name="Hawkins A.R."/>
            <person name="Duncan J.M."/>
            <person name="Kinghorn J.R."/>
        </authorList>
    </citation>
    <scope>NUCLEOTIDE SEQUENCE [GENOMIC DNA]</scope>
</reference>
<keyword id="KW-0067">ATP-binding</keyword>
<keyword id="KW-0963">Cytoplasm</keyword>
<keyword id="KW-0206">Cytoskeleton</keyword>
<keyword id="KW-0378">Hydrolase</keyword>
<keyword id="KW-0547">Nucleotide-binding</keyword>
<accession>P22131</accession>
<comment type="function">
    <text>Actins are highly conserved proteins that are involved in various types of cell motility and are ubiquitously expressed in all eukaryotic cells.</text>
</comment>
<comment type="catalytic activity">
    <reaction evidence="1">
        <text>ATP + H2O = ADP + phosphate + H(+)</text>
        <dbReference type="Rhea" id="RHEA:13065"/>
        <dbReference type="ChEBI" id="CHEBI:15377"/>
        <dbReference type="ChEBI" id="CHEBI:15378"/>
        <dbReference type="ChEBI" id="CHEBI:30616"/>
        <dbReference type="ChEBI" id="CHEBI:43474"/>
        <dbReference type="ChEBI" id="CHEBI:456216"/>
    </reaction>
</comment>
<comment type="subcellular location">
    <subcellularLocation>
        <location>Cytoplasm</location>
        <location>Cytoskeleton</location>
    </subcellularLocation>
</comment>
<comment type="tissue specificity">
    <text>ACTA and ACTB are actively transcribed in mycelium, sporangia and germinating cysts but only at a low level in the case of ACTB.</text>
</comment>
<comment type="similarity">
    <text evidence="2">Belongs to the actin family.</text>
</comment>
<evidence type="ECO:0000250" key="1">
    <source>
        <dbReference type="UniProtKB" id="P68137"/>
    </source>
</evidence>
<evidence type="ECO:0000305" key="2"/>
<organism>
    <name type="scientific">Phytophthora infestans</name>
    <name type="common">Potato late blight agent</name>
    <name type="synonym">Botrytis infestans</name>
    <dbReference type="NCBI Taxonomy" id="4787"/>
    <lineage>
        <taxon>Eukaryota</taxon>
        <taxon>Sar</taxon>
        <taxon>Stramenopiles</taxon>
        <taxon>Oomycota</taxon>
        <taxon>Peronosporales</taxon>
        <taxon>Peronosporaceae</taxon>
        <taxon>Phytophthora</taxon>
    </lineage>
</organism>
<gene>
    <name type="primary">ACTA</name>
</gene>
<proteinExistence type="evidence at transcript level"/>
<protein>
    <recommendedName>
        <fullName>Actin-1</fullName>
        <ecNumber evidence="1">3.6.4.-</ecNumber>
    </recommendedName>
</protein>
<dbReference type="EC" id="3.6.4.-" evidence="1"/>
<dbReference type="EMBL" id="M59715">
    <property type="protein sequence ID" value="AAA33749.1"/>
    <property type="molecule type" value="Genomic_DNA"/>
</dbReference>
<dbReference type="PIR" id="JE0414">
    <property type="entry name" value="JE0414"/>
</dbReference>
<dbReference type="SMR" id="P22131"/>
<dbReference type="VEuPathDB" id="FungiDB:PITG_15117"/>
<dbReference type="GO" id="GO:0005737">
    <property type="term" value="C:cytoplasm"/>
    <property type="evidence" value="ECO:0007669"/>
    <property type="project" value="UniProtKB-KW"/>
</dbReference>
<dbReference type="GO" id="GO:0005856">
    <property type="term" value="C:cytoskeleton"/>
    <property type="evidence" value="ECO:0007669"/>
    <property type="project" value="UniProtKB-SubCell"/>
</dbReference>
<dbReference type="GO" id="GO:0005524">
    <property type="term" value="F:ATP binding"/>
    <property type="evidence" value="ECO:0007669"/>
    <property type="project" value="UniProtKB-KW"/>
</dbReference>
<dbReference type="GO" id="GO:0016787">
    <property type="term" value="F:hydrolase activity"/>
    <property type="evidence" value="ECO:0007669"/>
    <property type="project" value="UniProtKB-KW"/>
</dbReference>
<dbReference type="CDD" id="cd10224">
    <property type="entry name" value="ASKHA_NBD_actin"/>
    <property type="match status" value="1"/>
</dbReference>
<dbReference type="FunFam" id="2.30.36.70:FF:000001">
    <property type="entry name" value="Actin, alpha skeletal muscle"/>
    <property type="match status" value="1"/>
</dbReference>
<dbReference type="FunFam" id="3.30.420.40:FF:000291">
    <property type="entry name" value="Actin, alpha skeletal muscle"/>
    <property type="match status" value="1"/>
</dbReference>
<dbReference type="FunFam" id="3.90.640.10:FF:000047">
    <property type="entry name" value="Actin, alpha skeletal muscle"/>
    <property type="match status" value="1"/>
</dbReference>
<dbReference type="FunFam" id="3.30.420.40:FF:000404">
    <property type="entry name" value="Major actin"/>
    <property type="match status" value="1"/>
</dbReference>
<dbReference type="FunFam" id="3.30.420.40:FF:000058">
    <property type="entry name" value="Putative actin-related protein 5"/>
    <property type="match status" value="1"/>
</dbReference>
<dbReference type="Gene3D" id="3.30.420.40">
    <property type="match status" value="2"/>
</dbReference>
<dbReference type="Gene3D" id="3.90.640.10">
    <property type="entry name" value="Actin, Chain A, domain 4"/>
    <property type="match status" value="1"/>
</dbReference>
<dbReference type="InterPro" id="IPR004000">
    <property type="entry name" value="Actin"/>
</dbReference>
<dbReference type="InterPro" id="IPR020902">
    <property type="entry name" value="Actin/actin-like_CS"/>
</dbReference>
<dbReference type="InterPro" id="IPR004001">
    <property type="entry name" value="Actin_CS"/>
</dbReference>
<dbReference type="InterPro" id="IPR043129">
    <property type="entry name" value="ATPase_NBD"/>
</dbReference>
<dbReference type="PANTHER" id="PTHR11937">
    <property type="entry name" value="ACTIN"/>
    <property type="match status" value="1"/>
</dbReference>
<dbReference type="Pfam" id="PF00022">
    <property type="entry name" value="Actin"/>
    <property type="match status" value="1"/>
</dbReference>
<dbReference type="PRINTS" id="PR00190">
    <property type="entry name" value="ACTIN"/>
</dbReference>
<dbReference type="SMART" id="SM00268">
    <property type="entry name" value="ACTIN"/>
    <property type="match status" value="1"/>
</dbReference>
<dbReference type="SUPFAM" id="SSF53067">
    <property type="entry name" value="Actin-like ATPase domain"/>
    <property type="match status" value="2"/>
</dbReference>
<dbReference type="PROSITE" id="PS00406">
    <property type="entry name" value="ACTINS_1"/>
    <property type="match status" value="1"/>
</dbReference>
<dbReference type="PROSITE" id="PS00432">
    <property type="entry name" value="ACTINS_2"/>
    <property type="match status" value="1"/>
</dbReference>
<dbReference type="PROSITE" id="PS01132">
    <property type="entry name" value="ACTINS_ACT_LIKE"/>
    <property type="match status" value="1"/>
</dbReference>
<name>ACT1_PHYIN</name>
<feature type="chain" id="PRO_0000088984" description="Actin-1">
    <location>
        <begin position="1"/>
        <end position="376"/>
    </location>
</feature>